<gene>
    <name evidence="1" type="primary">lipA</name>
    <name type="ordered locus">Dvul_2079</name>
</gene>
<keyword id="KW-0004">4Fe-4S</keyword>
<keyword id="KW-0963">Cytoplasm</keyword>
<keyword id="KW-0408">Iron</keyword>
<keyword id="KW-0411">Iron-sulfur</keyword>
<keyword id="KW-0479">Metal-binding</keyword>
<keyword id="KW-0949">S-adenosyl-L-methionine</keyword>
<keyword id="KW-0808">Transferase</keyword>
<protein>
    <recommendedName>
        <fullName evidence="1">Lipoyl synthase</fullName>
        <ecNumber evidence="1">2.8.1.8</ecNumber>
    </recommendedName>
    <alternativeName>
        <fullName evidence="1">Lip-syn</fullName>
        <shortName evidence="1">LS</shortName>
    </alternativeName>
    <alternativeName>
        <fullName evidence="1">Lipoate synthase</fullName>
    </alternativeName>
    <alternativeName>
        <fullName evidence="1">Lipoic acid synthase</fullName>
    </alternativeName>
    <alternativeName>
        <fullName evidence="1">Sulfur insertion protein LipA</fullName>
    </alternativeName>
</protein>
<accession>A1VF79</accession>
<organism>
    <name type="scientific">Nitratidesulfovibrio vulgaris (strain DP4)</name>
    <name type="common">Desulfovibrio vulgaris</name>
    <dbReference type="NCBI Taxonomy" id="391774"/>
    <lineage>
        <taxon>Bacteria</taxon>
        <taxon>Pseudomonadati</taxon>
        <taxon>Thermodesulfobacteriota</taxon>
        <taxon>Desulfovibrionia</taxon>
        <taxon>Desulfovibrionales</taxon>
        <taxon>Desulfovibrionaceae</taxon>
        <taxon>Nitratidesulfovibrio</taxon>
    </lineage>
</organism>
<proteinExistence type="inferred from homology"/>
<comment type="function">
    <text evidence="1">Catalyzes the radical-mediated insertion of two sulfur atoms into the C-6 and C-8 positions of the octanoyl moiety bound to the lipoyl domains of lipoate-dependent enzymes, thereby converting the octanoylated domains into lipoylated derivatives.</text>
</comment>
<comment type="catalytic activity">
    <reaction evidence="1">
        <text>[[Fe-S] cluster scaffold protein carrying a second [4Fe-4S](2+) cluster] + N(6)-octanoyl-L-lysyl-[protein] + 2 oxidized [2Fe-2S]-[ferredoxin] + 2 S-adenosyl-L-methionine + 4 H(+) = [[Fe-S] cluster scaffold protein] + N(6)-[(R)-dihydrolipoyl]-L-lysyl-[protein] + 4 Fe(3+) + 2 hydrogen sulfide + 2 5'-deoxyadenosine + 2 L-methionine + 2 reduced [2Fe-2S]-[ferredoxin]</text>
        <dbReference type="Rhea" id="RHEA:16585"/>
        <dbReference type="Rhea" id="RHEA-COMP:9928"/>
        <dbReference type="Rhea" id="RHEA-COMP:10000"/>
        <dbReference type="Rhea" id="RHEA-COMP:10001"/>
        <dbReference type="Rhea" id="RHEA-COMP:10475"/>
        <dbReference type="Rhea" id="RHEA-COMP:14568"/>
        <dbReference type="Rhea" id="RHEA-COMP:14569"/>
        <dbReference type="ChEBI" id="CHEBI:15378"/>
        <dbReference type="ChEBI" id="CHEBI:17319"/>
        <dbReference type="ChEBI" id="CHEBI:29034"/>
        <dbReference type="ChEBI" id="CHEBI:29919"/>
        <dbReference type="ChEBI" id="CHEBI:33722"/>
        <dbReference type="ChEBI" id="CHEBI:33737"/>
        <dbReference type="ChEBI" id="CHEBI:33738"/>
        <dbReference type="ChEBI" id="CHEBI:57844"/>
        <dbReference type="ChEBI" id="CHEBI:59789"/>
        <dbReference type="ChEBI" id="CHEBI:78809"/>
        <dbReference type="ChEBI" id="CHEBI:83100"/>
        <dbReference type="EC" id="2.8.1.8"/>
    </reaction>
</comment>
<comment type="cofactor">
    <cofactor evidence="1">
        <name>[4Fe-4S] cluster</name>
        <dbReference type="ChEBI" id="CHEBI:49883"/>
    </cofactor>
    <text evidence="1">Binds 2 [4Fe-4S] clusters per subunit. One cluster is coordinated with 3 cysteines and an exchangeable S-adenosyl-L-methionine.</text>
</comment>
<comment type="pathway">
    <text evidence="1">Protein modification; protein lipoylation via endogenous pathway; protein N(6)-(lipoyl)lysine from octanoyl-[acyl-carrier-protein]: step 2/2.</text>
</comment>
<comment type="subcellular location">
    <subcellularLocation>
        <location evidence="1">Cytoplasm</location>
    </subcellularLocation>
</comment>
<comment type="similarity">
    <text evidence="1">Belongs to the radical SAM superfamily. Lipoyl synthase family.</text>
</comment>
<name>LIPA_NITV4</name>
<reference key="1">
    <citation type="journal article" date="2009" name="Environ. Microbiol.">
        <title>Contribution of mobile genetic elements to Desulfovibrio vulgaris genome plasticity.</title>
        <authorList>
            <person name="Walker C.B."/>
            <person name="Stolyar S."/>
            <person name="Chivian D."/>
            <person name="Pinel N."/>
            <person name="Gabster J.A."/>
            <person name="Dehal P.S."/>
            <person name="He Z."/>
            <person name="Yang Z.K."/>
            <person name="Yen H.C."/>
            <person name="Zhou J."/>
            <person name="Wall J.D."/>
            <person name="Hazen T.C."/>
            <person name="Arkin A.P."/>
            <person name="Stahl D.A."/>
        </authorList>
    </citation>
    <scope>NUCLEOTIDE SEQUENCE [LARGE SCALE GENOMIC DNA]</scope>
    <source>
        <strain>DP4</strain>
    </source>
</reference>
<dbReference type="EC" id="2.8.1.8" evidence="1"/>
<dbReference type="EMBL" id="CP000527">
    <property type="protein sequence ID" value="ABM29095.1"/>
    <property type="molecule type" value="Genomic_DNA"/>
</dbReference>
<dbReference type="RefSeq" id="WP_011792642.1">
    <property type="nucleotide sequence ID" value="NC_008751.1"/>
</dbReference>
<dbReference type="SMR" id="A1VF79"/>
<dbReference type="KEGG" id="dvl:Dvul_2079"/>
<dbReference type="HOGENOM" id="CLU_033144_2_1_7"/>
<dbReference type="UniPathway" id="UPA00538">
    <property type="reaction ID" value="UER00593"/>
</dbReference>
<dbReference type="Proteomes" id="UP000009173">
    <property type="component" value="Chromosome"/>
</dbReference>
<dbReference type="GO" id="GO:0005737">
    <property type="term" value="C:cytoplasm"/>
    <property type="evidence" value="ECO:0007669"/>
    <property type="project" value="UniProtKB-SubCell"/>
</dbReference>
<dbReference type="GO" id="GO:0051539">
    <property type="term" value="F:4 iron, 4 sulfur cluster binding"/>
    <property type="evidence" value="ECO:0007669"/>
    <property type="project" value="UniProtKB-UniRule"/>
</dbReference>
<dbReference type="GO" id="GO:0016992">
    <property type="term" value="F:lipoate synthase activity"/>
    <property type="evidence" value="ECO:0007669"/>
    <property type="project" value="UniProtKB-UniRule"/>
</dbReference>
<dbReference type="GO" id="GO:0046872">
    <property type="term" value="F:metal ion binding"/>
    <property type="evidence" value="ECO:0007669"/>
    <property type="project" value="UniProtKB-KW"/>
</dbReference>
<dbReference type="CDD" id="cd01335">
    <property type="entry name" value="Radical_SAM"/>
    <property type="match status" value="1"/>
</dbReference>
<dbReference type="FunFam" id="3.20.20.70:FF:000186">
    <property type="entry name" value="Lipoyl synthase"/>
    <property type="match status" value="1"/>
</dbReference>
<dbReference type="Gene3D" id="3.20.20.70">
    <property type="entry name" value="Aldolase class I"/>
    <property type="match status" value="1"/>
</dbReference>
<dbReference type="HAMAP" id="MF_00206">
    <property type="entry name" value="Lipoyl_synth"/>
    <property type="match status" value="1"/>
</dbReference>
<dbReference type="InterPro" id="IPR013785">
    <property type="entry name" value="Aldolase_TIM"/>
</dbReference>
<dbReference type="InterPro" id="IPR006638">
    <property type="entry name" value="Elp3/MiaA/NifB-like_rSAM"/>
</dbReference>
<dbReference type="InterPro" id="IPR003698">
    <property type="entry name" value="Lipoyl_synth"/>
</dbReference>
<dbReference type="InterPro" id="IPR007197">
    <property type="entry name" value="rSAM"/>
</dbReference>
<dbReference type="NCBIfam" id="TIGR00510">
    <property type="entry name" value="lipA"/>
    <property type="match status" value="1"/>
</dbReference>
<dbReference type="NCBIfam" id="NF004019">
    <property type="entry name" value="PRK05481.1"/>
    <property type="match status" value="1"/>
</dbReference>
<dbReference type="NCBIfam" id="NF009544">
    <property type="entry name" value="PRK12928.1"/>
    <property type="match status" value="1"/>
</dbReference>
<dbReference type="PANTHER" id="PTHR10949">
    <property type="entry name" value="LIPOYL SYNTHASE"/>
    <property type="match status" value="1"/>
</dbReference>
<dbReference type="PANTHER" id="PTHR10949:SF0">
    <property type="entry name" value="LIPOYL SYNTHASE, MITOCHONDRIAL"/>
    <property type="match status" value="1"/>
</dbReference>
<dbReference type="Pfam" id="PF04055">
    <property type="entry name" value="Radical_SAM"/>
    <property type="match status" value="1"/>
</dbReference>
<dbReference type="PIRSF" id="PIRSF005963">
    <property type="entry name" value="Lipoyl_synth"/>
    <property type="match status" value="1"/>
</dbReference>
<dbReference type="SFLD" id="SFLDF00271">
    <property type="entry name" value="lipoyl_synthase"/>
    <property type="match status" value="1"/>
</dbReference>
<dbReference type="SFLD" id="SFLDS00029">
    <property type="entry name" value="Radical_SAM"/>
    <property type="match status" value="1"/>
</dbReference>
<dbReference type="SMART" id="SM00729">
    <property type="entry name" value="Elp3"/>
    <property type="match status" value="1"/>
</dbReference>
<dbReference type="SUPFAM" id="SSF102114">
    <property type="entry name" value="Radical SAM enzymes"/>
    <property type="match status" value="1"/>
</dbReference>
<dbReference type="PROSITE" id="PS51918">
    <property type="entry name" value="RADICAL_SAM"/>
    <property type="match status" value="1"/>
</dbReference>
<feature type="chain" id="PRO_0000325248" description="Lipoyl synthase">
    <location>
        <begin position="1"/>
        <end position="298"/>
    </location>
</feature>
<feature type="domain" description="Radical SAM core" evidence="2">
    <location>
        <begin position="55"/>
        <end position="269"/>
    </location>
</feature>
<feature type="binding site" evidence="1">
    <location>
        <position position="43"/>
    </location>
    <ligand>
        <name>[4Fe-4S] cluster</name>
        <dbReference type="ChEBI" id="CHEBI:49883"/>
        <label>1</label>
    </ligand>
</feature>
<feature type="binding site" evidence="1">
    <location>
        <position position="48"/>
    </location>
    <ligand>
        <name>[4Fe-4S] cluster</name>
        <dbReference type="ChEBI" id="CHEBI:49883"/>
        <label>1</label>
    </ligand>
</feature>
<feature type="binding site" evidence="1">
    <location>
        <position position="54"/>
    </location>
    <ligand>
        <name>[4Fe-4S] cluster</name>
        <dbReference type="ChEBI" id="CHEBI:49883"/>
        <label>1</label>
    </ligand>
</feature>
<feature type="binding site" evidence="1">
    <location>
        <position position="69"/>
    </location>
    <ligand>
        <name>[4Fe-4S] cluster</name>
        <dbReference type="ChEBI" id="CHEBI:49883"/>
        <label>2</label>
        <note>4Fe-4S-S-AdoMet</note>
    </ligand>
</feature>
<feature type="binding site" evidence="1">
    <location>
        <position position="73"/>
    </location>
    <ligand>
        <name>[4Fe-4S] cluster</name>
        <dbReference type="ChEBI" id="CHEBI:49883"/>
        <label>2</label>
        <note>4Fe-4S-S-AdoMet</note>
    </ligand>
</feature>
<feature type="binding site" evidence="1">
    <location>
        <position position="76"/>
    </location>
    <ligand>
        <name>[4Fe-4S] cluster</name>
        <dbReference type="ChEBI" id="CHEBI:49883"/>
        <label>2</label>
        <note>4Fe-4S-S-AdoMet</note>
    </ligand>
</feature>
<feature type="binding site" evidence="1">
    <location>
        <position position="280"/>
    </location>
    <ligand>
        <name>[4Fe-4S] cluster</name>
        <dbReference type="ChEBI" id="CHEBI:49883"/>
        <label>1</label>
    </ligand>
</feature>
<evidence type="ECO:0000255" key="1">
    <source>
        <dbReference type="HAMAP-Rule" id="MF_00206"/>
    </source>
</evidence>
<evidence type="ECO:0000255" key="2">
    <source>
        <dbReference type="PROSITE-ProRule" id="PRU01266"/>
    </source>
</evidence>
<sequence>MSSPDNSSPSLRIPPWLRVKLPCSHTFADTRALVEGLGLNTVCNSAKCPNMFECFSSGTATFLILGNVCTRNCAFCNITPGHVSPPDPDEPRRVAEAAARLALRHVVVTSVTRDDLDDGGAAHFAATITRLRAALPAATVEVLIPDFRGDHAALRTVMAAAPHIVNHNVETPPAHYARIRPQADYRQSLELLRRVKAAGGVAKSGLMVGLGENDTEVEGVLADLADCGCDIVTVGQYMRPSRQHPPVERYVHPDTFESFAACGRGMGIPFVFSAPLVRSSYNAESAYNALCTLRRKPA</sequence>